<protein>
    <recommendedName>
        <fullName>Phospholipase A2 neuwieditoxin-2</fullName>
        <shortName>NeuTX-2</shortName>
        <shortName>PLA2</shortName>
        <ecNumber>3.1.1.4</ecNumber>
    </recommendedName>
    <alternativeName>
        <fullName>Neuwieditoxin-II</fullName>
        <shortName>NeuTX-II</shortName>
    </alternativeName>
    <alternativeName>
        <fullName>Phosphatidylcholine 2-acylhydrolase</fullName>
    </alternativeName>
</protein>
<accession>P0DM50</accession>
<feature type="chain" id="PRO_0000423031" description="Phospholipase A2 neuwieditoxin-2">
    <location>
        <begin position="1"/>
        <end position="40" status="greater than"/>
    </location>
</feature>
<feature type="binding site" evidence="1">
    <location>
        <position position="27"/>
    </location>
    <ligand>
        <name>Ca(2+)</name>
        <dbReference type="ChEBI" id="CHEBI:29108"/>
    </ligand>
</feature>
<feature type="binding site" evidence="1">
    <location>
        <position position="29"/>
    </location>
    <ligand>
        <name>Ca(2+)</name>
        <dbReference type="ChEBI" id="CHEBI:29108"/>
    </ligand>
</feature>
<feature type="binding site" evidence="1">
    <location>
        <position position="31"/>
    </location>
    <ligand>
        <name>Ca(2+)</name>
        <dbReference type="ChEBI" id="CHEBI:29108"/>
    </ligand>
</feature>
<feature type="disulfide bond" evidence="1">
    <location>
        <begin position="26"/>
        <end status="unknown"/>
    </location>
</feature>
<feature type="disulfide bond" evidence="1">
    <location>
        <begin position="28"/>
        <end status="unknown"/>
    </location>
</feature>
<feature type="non-terminal residue">
    <location>
        <position position="40"/>
    </location>
</feature>
<reference key="1">
    <citation type="journal article" date="2007" name="J. Venom. Anim. Toxins Incl. Trop. Dis.">
        <title>Purification and N-terminal sequencing of two presynaptic neurotoxic PLA2, neuwieditoxin-I and neuwieditoxin-II, from Bothrops neuwiedi pauloensis (Jararaca pintada) venom.</title>
        <authorList>
            <person name="Borja-Oliveira C.R."/>
            <person name="Kassab B.H."/>
            <person name="Soares A.M."/>
            <person name="Toyama M.H."/>
            <person name="Giglio J.R."/>
            <person name="Marangoni S."/>
            <person name="Re L."/>
            <person name="Rodrigues-Simioni L."/>
        </authorList>
    </citation>
    <scope>PROTEIN SEQUENCE</scope>
    <scope>FUNCTION</scope>
    <scope>CATALYTIC ACTIVITY</scope>
    <scope>SUBUNIT</scope>
    <source>
        <tissue>Venom</tissue>
    </source>
</reference>
<evidence type="ECO:0000250" key="1"/>
<evidence type="ECO:0000269" key="2">
    <source ref="1"/>
</evidence>
<evidence type="ECO:0000305" key="3"/>
<name>PA2X2_BOTPA</name>
<sequence length="40" mass="4524">SLFEFAKMILEETKRLPFPYYGAYGCYCGWGGQGQPKDAT</sequence>
<comment type="function">
    <text evidence="2">Snake venom phospholipase A2 (PLA2) that shows presynaptic neurotoxicity. 10 ug/ml of this protein produce complete neuromuscular blockade up to 70 minutes, without inhibiting the responses to acetylcholine (ACh), but with a partial inhibition (67%) of the response to potassium chloride (KCl).</text>
</comment>
<comment type="catalytic activity">
    <reaction evidence="2">
        <text>a 1,2-diacyl-sn-glycero-3-phosphocholine + H2O = a 1-acyl-sn-glycero-3-phosphocholine + a fatty acid + H(+)</text>
        <dbReference type="Rhea" id="RHEA:15801"/>
        <dbReference type="ChEBI" id="CHEBI:15377"/>
        <dbReference type="ChEBI" id="CHEBI:15378"/>
        <dbReference type="ChEBI" id="CHEBI:28868"/>
        <dbReference type="ChEBI" id="CHEBI:57643"/>
        <dbReference type="ChEBI" id="CHEBI:58168"/>
        <dbReference type="EC" id="3.1.1.4"/>
    </reaction>
</comment>
<comment type="cofactor">
    <cofactor evidence="1">
        <name>Ca(2+)</name>
        <dbReference type="ChEBI" id="CHEBI:29108"/>
    </cofactor>
    <text evidence="1">Binds 1 Ca(2+) ion.</text>
</comment>
<comment type="subunit">
    <text evidence="2">Dimer.</text>
</comment>
<comment type="subcellular location">
    <subcellularLocation>
        <location>Secreted</location>
    </subcellularLocation>
</comment>
<comment type="tissue specificity">
    <text>Expressed by the venom gland.</text>
</comment>
<comment type="similarity">
    <text evidence="3">Belongs to the phospholipase A2 family. Group II subfamily. D49 sub-subfamily.</text>
</comment>
<organism>
    <name type="scientific">Bothrops pauloensis</name>
    <name type="common">Neuwied's lancehead</name>
    <name type="synonym">Bothrops neuwiedi pauloensis</name>
    <dbReference type="NCBI Taxonomy" id="1042543"/>
    <lineage>
        <taxon>Eukaryota</taxon>
        <taxon>Metazoa</taxon>
        <taxon>Chordata</taxon>
        <taxon>Craniata</taxon>
        <taxon>Vertebrata</taxon>
        <taxon>Euteleostomi</taxon>
        <taxon>Lepidosauria</taxon>
        <taxon>Squamata</taxon>
        <taxon>Bifurcata</taxon>
        <taxon>Unidentata</taxon>
        <taxon>Episquamata</taxon>
        <taxon>Toxicofera</taxon>
        <taxon>Serpentes</taxon>
        <taxon>Colubroidea</taxon>
        <taxon>Viperidae</taxon>
        <taxon>Crotalinae</taxon>
        <taxon>Bothrops</taxon>
    </lineage>
</organism>
<keyword id="KW-0106">Calcium</keyword>
<keyword id="KW-0903">Direct protein sequencing</keyword>
<keyword id="KW-1015">Disulfide bond</keyword>
<keyword id="KW-0378">Hydrolase</keyword>
<keyword id="KW-0442">Lipid degradation</keyword>
<keyword id="KW-0443">Lipid metabolism</keyword>
<keyword id="KW-0479">Metal-binding</keyword>
<keyword id="KW-0528">Neurotoxin</keyword>
<keyword id="KW-0638">Presynaptic neurotoxin</keyword>
<keyword id="KW-0964">Secreted</keyword>
<keyword id="KW-0800">Toxin</keyword>
<proteinExistence type="evidence at protein level"/>
<dbReference type="EC" id="3.1.1.4"/>
<dbReference type="SMR" id="P0DM50"/>
<dbReference type="GO" id="GO:0005576">
    <property type="term" value="C:extracellular region"/>
    <property type="evidence" value="ECO:0007669"/>
    <property type="project" value="UniProtKB-SubCell"/>
</dbReference>
<dbReference type="GO" id="GO:0005509">
    <property type="term" value="F:calcium ion binding"/>
    <property type="evidence" value="ECO:0007669"/>
    <property type="project" value="InterPro"/>
</dbReference>
<dbReference type="GO" id="GO:0004623">
    <property type="term" value="F:phospholipase A2 activity"/>
    <property type="evidence" value="ECO:0007669"/>
    <property type="project" value="UniProtKB-EC"/>
</dbReference>
<dbReference type="GO" id="GO:0090729">
    <property type="term" value="F:toxin activity"/>
    <property type="evidence" value="ECO:0007669"/>
    <property type="project" value="UniProtKB-KW"/>
</dbReference>
<dbReference type="GO" id="GO:0050482">
    <property type="term" value="P:arachidonate secretion"/>
    <property type="evidence" value="ECO:0007669"/>
    <property type="project" value="InterPro"/>
</dbReference>
<dbReference type="GO" id="GO:0016042">
    <property type="term" value="P:lipid catabolic process"/>
    <property type="evidence" value="ECO:0007669"/>
    <property type="project" value="UniProtKB-KW"/>
</dbReference>
<dbReference type="GO" id="GO:0006644">
    <property type="term" value="P:phospholipid metabolic process"/>
    <property type="evidence" value="ECO:0007669"/>
    <property type="project" value="InterPro"/>
</dbReference>
<dbReference type="Gene3D" id="1.20.90.10">
    <property type="entry name" value="Phospholipase A2 domain"/>
    <property type="match status" value="1"/>
</dbReference>
<dbReference type="InterPro" id="IPR001211">
    <property type="entry name" value="PLipase_A2"/>
</dbReference>
<dbReference type="InterPro" id="IPR016090">
    <property type="entry name" value="PLipase_A2_dom"/>
</dbReference>
<dbReference type="InterPro" id="IPR036444">
    <property type="entry name" value="PLipase_A2_dom_sf"/>
</dbReference>
<dbReference type="Pfam" id="PF00068">
    <property type="entry name" value="Phospholip_A2_1"/>
    <property type="match status" value="1"/>
</dbReference>
<dbReference type="PRINTS" id="PR00389">
    <property type="entry name" value="PHPHLIPASEA2"/>
</dbReference>
<dbReference type="SUPFAM" id="SSF48619">
    <property type="entry name" value="Phospholipase A2, PLA2"/>
    <property type="match status" value="1"/>
</dbReference>